<proteinExistence type="inferred from homology"/>
<comment type="function">
    <text evidence="1">Catalyzes the synthesis of the hydroxymethylpyrimidine phosphate (HMP-P) moiety of thiamine from aminoimidazole ribotide (AIR) in a radical S-adenosyl-L-methionine (SAM)-dependent reaction.</text>
</comment>
<comment type="catalytic activity">
    <reaction evidence="1">
        <text>5-amino-1-(5-phospho-beta-D-ribosyl)imidazole + S-adenosyl-L-methionine = 4-amino-2-methyl-5-(phosphooxymethyl)pyrimidine + CO + 5'-deoxyadenosine + formate + L-methionine + 3 H(+)</text>
        <dbReference type="Rhea" id="RHEA:24840"/>
        <dbReference type="ChEBI" id="CHEBI:15378"/>
        <dbReference type="ChEBI" id="CHEBI:15740"/>
        <dbReference type="ChEBI" id="CHEBI:17245"/>
        <dbReference type="ChEBI" id="CHEBI:17319"/>
        <dbReference type="ChEBI" id="CHEBI:57844"/>
        <dbReference type="ChEBI" id="CHEBI:58354"/>
        <dbReference type="ChEBI" id="CHEBI:59789"/>
        <dbReference type="ChEBI" id="CHEBI:137981"/>
        <dbReference type="EC" id="4.1.99.17"/>
    </reaction>
</comment>
<comment type="cofactor">
    <cofactor evidence="1">
        <name>[4Fe-4S] cluster</name>
        <dbReference type="ChEBI" id="CHEBI:49883"/>
    </cofactor>
    <text evidence="1">Binds 1 [4Fe-4S] cluster per subunit. The cluster is coordinated with 3 cysteines and an exchangeable S-adenosyl-L-methionine.</text>
</comment>
<comment type="pathway">
    <text evidence="1">Cofactor biosynthesis; thiamine diphosphate biosynthesis.</text>
</comment>
<comment type="similarity">
    <text evidence="1">Belongs to the ThiC family.</text>
</comment>
<sequence>MTLIEDARKGVVTDFVKKAAEYEGIEAEKLIRLISHGYVVLPKNVRREEVQPRAIGMLTSTKVNANVGTSADYINVEEEVEKAIIAQKAGADAVMDLSSGGDLDAIRKRIMEVVEVPFGTVPIYQAARDCHRVVDMDEDDFFRVVEKHAKDGVDFMTIHAGVNWVSVERLRRSKRLLGVVSRGGAITIGWMLHNEKENPYYKDFDYLLEILKEYDVTISLGDAYRPGCIHDAGDRAKYTEFIMLGELVEKCREKGVQCMVEGPGHVPLDQIETSVRAMKSVTDNAPLYLLGPLVTDIAAGYDHIAAAIGAAIAGMAGADFICYVTPSEHLALPTVEDVREGVIAAKIAAHAIDLIKEGQRERARQRDYEMSLARKNLDWERQFELSIDPEKAREIYSRRKSESEACSMCGDLCAIKLVKEAFERD</sequence>
<gene>
    <name evidence="1" type="primary">thiC</name>
    <name type="ordered locus">AF_2412</name>
</gene>
<evidence type="ECO:0000255" key="1">
    <source>
        <dbReference type="HAMAP-Rule" id="MF_00089"/>
    </source>
</evidence>
<accession>O30259</accession>
<keyword id="KW-0004">4Fe-4S</keyword>
<keyword id="KW-0408">Iron</keyword>
<keyword id="KW-0411">Iron-sulfur</keyword>
<keyword id="KW-0456">Lyase</keyword>
<keyword id="KW-0479">Metal-binding</keyword>
<keyword id="KW-1185">Reference proteome</keyword>
<keyword id="KW-0949">S-adenosyl-L-methionine</keyword>
<keyword id="KW-0784">Thiamine biosynthesis</keyword>
<keyword id="KW-0862">Zinc</keyword>
<reference key="1">
    <citation type="journal article" date="1997" name="Nature">
        <title>The complete genome sequence of the hyperthermophilic, sulphate-reducing archaeon Archaeoglobus fulgidus.</title>
        <authorList>
            <person name="Klenk H.-P."/>
            <person name="Clayton R.A."/>
            <person name="Tomb J.-F."/>
            <person name="White O."/>
            <person name="Nelson K.E."/>
            <person name="Ketchum K.A."/>
            <person name="Dodson R.J."/>
            <person name="Gwinn M.L."/>
            <person name="Hickey E.K."/>
            <person name="Peterson J.D."/>
            <person name="Richardson D.L."/>
            <person name="Kerlavage A.R."/>
            <person name="Graham D.E."/>
            <person name="Kyrpides N.C."/>
            <person name="Fleischmann R.D."/>
            <person name="Quackenbush J."/>
            <person name="Lee N.H."/>
            <person name="Sutton G.G."/>
            <person name="Gill S.R."/>
            <person name="Kirkness E.F."/>
            <person name="Dougherty B.A."/>
            <person name="McKenney K."/>
            <person name="Adams M.D."/>
            <person name="Loftus B.J."/>
            <person name="Peterson S.N."/>
            <person name="Reich C.I."/>
            <person name="McNeil L.K."/>
            <person name="Badger J.H."/>
            <person name="Glodek A."/>
            <person name="Zhou L."/>
            <person name="Overbeek R."/>
            <person name="Gocayne J.D."/>
            <person name="Weidman J.F."/>
            <person name="McDonald L.A."/>
            <person name="Utterback T.R."/>
            <person name="Cotton M.D."/>
            <person name="Spriggs T."/>
            <person name="Artiach P."/>
            <person name="Kaine B.P."/>
            <person name="Sykes S.M."/>
            <person name="Sadow P.W."/>
            <person name="D'Andrea K.P."/>
            <person name="Bowman C."/>
            <person name="Fujii C."/>
            <person name="Garland S.A."/>
            <person name="Mason T.M."/>
            <person name="Olsen G.J."/>
            <person name="Fraser C.M."/>
            <person name="Smith H.O."/>
            <person name="Woese C.R."/>
            <person name="Venter J.C."/>
        </authorList>
    </citation>
    <scope>NUCLEOTIDE SEQUENCE [LARGE SCALE GENOMIC DNA]</scope>
    <source>
        <strain>ATCC 49558 / DSM 4304 / JCM 9628 / NBRC 100126 / VC-16</strain>
    </source>
</reference>
<dbReference type="EC" id="4.1.99.17" evidence="1"/>
<dbReference type="EMBL" id="AE000782">
    <property type="protein sequence ID" value="AAB91254.1"/>
    <property type="molecule type" value="Genomic_DNA"/>
</dbReference>
<dbReference type="PIR" id="E69551">
    <property type="entry name" value="E69551"/>
</dbReference>
<dbReference type="RefSeq" id="WP_010879899.1">
    <property type="nucleotide sequence ID" value="NC_000917.1"/>
</dbReference>
<dbReference type="SMR" id="O30259"/>
<dbReference type="STRING" id="224325.AF_2412"/>
<dbReference type="PaxDb" id="224325-AF_2412"/>
<dbReference type="EnsemblBacteria" id="AAB91254">
    <property type="protein sequence ID" value="AAB91254"/>
    <property type="gene ID" value="AF_2412"/>
</dbReference>
<dbReference type="GeneID" id="24796136"/>
<dbReference type="KEGG" id="afu:AF_2412"/>
<dbReference type="eggNOG" id="arCOG02741">
    <property type="taxonomic scope" value="Archaea"/>
</dbReference>
<dbReference type="HOGENOM" id="CLU_013181_2_2_2"/>
<dbReference type="OrthoDB" id="335406at2157"/>
<dbReference type="PhylomeDB" id="O30259"/>
<dbReference type="UniPathway" id="UPA00060"/>
<dbReference type="Proteomes" id="UP000002199">
    <property type="component" value="Chromosome"/>
</dbReference>
<dbReference type="GO" id="GO:0051539">
    <property type="term" value="F:4 iron, 4 sulfur cluster binding"/>
    <property type="evidence" value="ECO:0007669"/>
    <property type="project" value="UniProtKB-KW"/>
</dbReference>
<dbReference type="GO" id="GO:0016830">
    <property type="term" value="F:carbon-carbon lyase activity"/>
    <property type="evidence" value="ECO:0007669"/>
    <property type="project" value="InterPro"/>
</dbReference>
<dbReference type="GO" id="GO:0008270">
    <property type="term" value="F:zinc ion binding"/>
    <property type="evidence" value="ECO:0007669"/>
    <property type="project" value="UniProtKB-UniRule"/>
</dbReference>
<dbReference type="GO" id="GO:0009228">
    <property type="term" value="P:thiamine biosynthetic process"/>
    <property type="evidence" value="ECO:0007669"/>
    <property type="project" value="UniProtKB-KW"/>
</dbReference>
<dbReference type="GO" id="GO:0009229">
    <property type="term" value="P:thiamine diphosphate biosynthetic process"/>
    <property type="evidence" value="ECO:0007669"/>
    <property type="project" value="UniProtKB-UniRule"/>
</dbReference>
<dbReference type="FunFam" id="3.20.20.540:FF:000001">
    <property type="entry name" value="Phosphomethylpyrimidine synthase"/>
    <property type="match status" value="1"/>
</dbReference>
<dbReference type="Gene3D" id="6.10.250.620">
    <property type="match status" value="1"/>
</dbReference>
<dbReference type="Gene3D" id="3.20.20.540">
    <property type="entry name" value="Radical SAM ThiC family, central domain"/>
    <property type="match status" value="1"/>
</dbReference>
<dbReference type="HAMAP" id="MF_00089">
    <property type="entry name" value="ThiC"/>
    <property type="match status" value="1"/>
</dbReference>
<dbReference type="InterPro" id="IPR037509">
    <property type="entry name" value="ThiC"/>
</dbReference>
<dbReference type="InterPro" id="IPR038521">
    <property type="entry name" value="ThiC/Bza_core_dom"/>
</dbReference>
<dbReference type="InterPro" id="IPR002817">
    <property type="entry name" value="ThiC/BzaA/B"/>
</dbReference>
<dbReference type="NCBIfam" id="NF009895">
    <property type="entry name" value="PRK13352.1"/>
    <property type="match status" value="1"/>
</dbReference>
<dbReference type="NCBIfam" id="TIGR00190">
    <property type="entry name" value="thiC"/>
    <property type="match status" value="1"/>
</dbReference>
<dbReference type="PANTHER" id="PTHR30557:SF1">
    <property type="entry name" value="PHOSPHOMETHYLPYRIMIDINE SYNTHASE, CHLOROPLASTIC"/>
    <property type="match status" value="1"/>
</dbReference>
<dbReference type="PANTHER" id="PTHR30557">
    <property type="entry name" value="THIAMINE BIOSYNTHESIS PROTEIN THIC"/>
    <property type="match status" value="1"/>
</dbReference>
<dbReference type="Pfam" id="PF01964">
    <property type="entry name" value="ThiC_Rad_SAM"/>
    <property type="match status" value="1"/>
</dbReference>
<dbReference type="SFLD" id="SFLDF00407">
    <property type="entry name" value="phosphomethylpyrimidine_syntha"/>
    <property type="match status" value="1"/>
</dbReference>
<dbReference type="SFLD" id="SFLDG01114">
    <property type="entry name" value="phosphomethylpyrimidine_syntha"/>
    <property type="match status" value="1"/>
</dbReference>
<dbReference type="SFLD" id="SFLDS00113">
    <property type="entry name" value="Radical_SAM_Phosphomethylpyrim"/>
    <property type="match status" value="1"/>
</dbReference>
<feature type="chain" id="PRO_0000152857" description="Phosphomethylpyrimidine synthase">
    <location>
        <begin position="1"/>
        <end position="425"/>
    </location>
</feature>
<feature type="binding site" evidence="1">
    <location>
        <position position="66"/>
    </location>
    <ligand>
        <name>substrate</name>
    </ligand>
</feature>
<feature type="binding site" evidence="1">
    <location>
        <position position="95"/>
    </location>
    <ligand>
        <name>substrate</name>
    </ligand>
</feature>
<feature type="binding site" evidence="1">
    <location>
        <position position="124"/>
    </location>
    <ligand>
        <name>substrate</name>
    </ligand>
</feature>
<feature type="binding site" evidence="1">
    <location>
        <position position="159"/>
    </location>
    <ligand>
        <name>substrate</name>
    </ligand>
</feature>
<feature type="binding site" evidence="1">
    <location>
        <begin position="181"/>
        <end position="183"/>
    </location>
    <ligand>
        <name>substrate</name>
    </ligand>
</feature>
<feature type="binding site" evidence="1">
    <location>
        <begin position="222"/>
        <end position="225"/>
    </location>
    <ligand>
        <name>substrate</name>
    </ligand>
</feature>
<feature type="binding site" evidence="1">
    <location>
        <position position="261"/>
    </location>
    <ligand>
        <name>substrate</name>
    </ligand>
</feature>
<feature type="binding site" evidence="1">
    <location>
        <position position="265"/>
    </location>
    <ligand>
        <name>Zn(2+)</name>
        <dbReference type="ChEBI" id="CHEBI:29105"/>
    </ligand>
</feature>
<feature type="binding site" evidence="1">
    <location>
        <position position="288"/>
    </location>
    <ligand>
        <name>substrate</name>
    </ligand>
</feature>
<feature type="binding site" evidence="1">
    <location>
        <position position="329"/>
    </location>
    <ligand>
        <name>Zn(2+)</name>
        <dbReference type="ChEBI" id="CHEBI:29105"/>
    </ligand>
</feature>
<feature type="binding site" evidence="1">
    <location>
        <position position="406"/>
    </location>
    <ligand>
        <name>[4Fe-4S] cluster</name>
        <dbReference type="ChEBI" id="CHEBI:49883"/>
        <note>4Fe-4S-S-AdoMet</note>
    </ligand>
</feature>
<feature type="binding site" evidence="1">
    <location>
        <position position="409"/>
    </location>
    <ligand>
        <name>[4Fe-4S] cluster</name>
        <dbReference type="ChEBI" id="CHEBI:49883"/>
        <note>4Fe-4S-S-AdoMet</note>
    </ligand>
</feature>
<feature type="binding site" evidence="1">
    <location>
        <position position="413"/>
    </location>
    <ligand>
        <name>[4Fe-4S] cluster</name>
        <dbReference type="ChEBI" id="CHEBI:49883"/>
        <note>4Fe-4S-S-AdoMet</note>
    </ligand>
</feature>
<organism>
    <name type="scientific">Archaeoglobus fulgidus (strain ATCC 49558 / DSM 4304 / JCM 9628 / NBRC 100126 / VC-16)</name>
    <dbReference type="NCBI Taxonomy" id="224325"/>
    <lineage>
        <taxon>Archaea</taxon>
        <taxon>Methanobacteriati</taxon>
        <taxon>Methanobacteriota</taxon>
        <taxon>Archaeoglobi</taxon>
        <taxon>Archaeoglobales</taxon>
        <taxon>Archaeoglobaceae</taxon>
        <taxon>Archaeoglobus</taxon>
    </lineage>
</organism>
<protein>
    <recommendedName>
        <fullName evidence="1">Phosphomethylpyrimidine synthase</fullName>
        <ecNumber evidence="1">4.1.99.17</ecNumber>
    </recommendedName>
    <alternativeName>
        <fullName evidence="1">Hydroxymethylpyrimidine phosphate synthase</fullName>
        <shortName evidence="1">HMP-P synthase</shortName>
        <shortName evidence="1">HMP-phosphate synthase</shortName>
        <shortName evidence="1">HMPP synthase</shortName>
    </alternativeName>
    <alternativeName>
        <fullName evidence="1">Thiamine biosynthesis protein ThiC</fullName>
    </alternativeName>
</protein>
<name>THIC_ARCFU</name>